<evidence type="ECO:0000255" key="1">
    <source>
        <dbReference type="HAMAP-Rule" id="MF_00384"/>
    </source>
</evidence>
<keyword id="KW-0028">Amino-acid biosynthesis</keyword>
<keyword id="KW-0067">ATP-binding</keyword>
<keyword id="KW-0963">Cytoplasm</keyword>
<keyword id="KW-0418">Kinase</keyword>
<keyword id="KW-0547">Nucleotide-binding</keyword>
<keyword id="KW-1185">Reference proteome</keyword>
<keyword id="KW-0791">Threonine biosynthesis</keyword>
<keyword id="KW-0808">Transferase</keyword>
<sequence length="308" mass="33046">MFFMSTVTVTVPATTANIGPGFDCIGAALTLYNQFTFTEQPEADTDLRITVTGTEAHRVSGDRTNLLYQAFTHLYDHLNKTPPKIAIDIKLGVPLARGLGSSATAIIGGLVGANELAGQPLSTAEIMELAIAIEGHPDNVVPALLGNCQLSVGEAENWEICQIPWHSDIIPVVAIPDFELSTEEARAVLPKTLSYGDAIFNIARMGLLIRALESGNEQWLNKAMADKLHQPYRQGLIEGYEFVQASALKAGAYGMVISGAGPTLLALTHPEKIQSVEKAMKNAWTQLEIVADVRSLSIDTQGANVNAH</sequence>
<dbReference type="EC" id="2.7.1.39" evidence="1"/>
<dbReference type="EMBL" id="CP000806">
    <property type="protein sequence ID" value="ACB49861.1"/>
    <property type="molecule type" value="Genomic_DNA"/>
</dbReference>
<dbReference type="SMR" id="B1WP79"/>
<dbReference type="STRING" id="43989.cce_0510"/>
<dbReference type="KEGG" id="cyt:cce_0510"/>
<dbReference type="eggNOG" id="COG0083">
    <property type="taxonomic scope" value="Bacteria"/>
</dbReference>
<dbReference type="HOGENOM" id="CLU_041243_0_2_3"/>
<dbReference type="UniPathway" id="UPA00050">
    <property type="reaction ID" value="UER00064"/>
</dbReference>
<dbReference type="Proteomes" id="UP000001203">
    <property type="component" value="Chromosome circular"/>
</dbReference>
<dbReference type="GO" id="GO:0005737">
    <property type="term" value="C:cytoplasm"/>
    <property type="evidence" value="ECO:0007669"/>
    <property type="project" value="UniProtKB-SubCell"/>
</dbReference>
<dbReference type="GO" id="GO:0005524">
    <property type="term" value="F:ATP binding"/>
    <property type="evidence" value="ECO:0007669"/>
    <property type="project" value="UniProtKB-UniRule"/>
</dbReference>
<dbReference type="GO" id="GO:0004413">
    <property type="term" value="F:homoserine kinase activity"/>
    <property type="evidence" value="ECO:0007669"/>
    <property type="project" value="UniProtKB-UniRule"/>
</dbReference>
<dbReference type="GO" id="GO:0009088">
    <property type="term" value="P:threonine biosynthetic process"/>
    <property type="evidence" value="ECO:0007669"/>
    <property type="project" value="UniProtKB-UniRule"/>
</dbReference>
<dbReference type="Gene3D" id="3.30.230.10">
    <property type="match status" value="1"/>
</dbReference>
<dbReference type="Gene3D" id="3.30.70.890">
    <property type="entry name" value="GHMP kinase, C-terminal domain"/>
    <property type="match status" value="1"/>
</dbReference>
<dbReference type="HAMAP" id="MF_00384">
    <property type="entry name" value="Homoser_kinase"/>
    <property type="match status" value="1"/>
</dbReference>
<dbReference type="InterPro" id="IPR013750">
    <property type="entry name" value="GHMP_kinase_C_dom"/>
</dbReference>
<dbReference type="InterPro" id="IPR036554">
    <property type="entry name" value="GHMP_kinase_C_sf"/>
</dbReference>
<dbReference type="InterPro" id="IPR006204">
    <property type="entry name" value="GHMP_kinase_N_dom"/>
</dbReference>
<dbReference type="InterPro" id="IPR006203">
    <property type="entry name" value="GHMP_knse_ATP-bd_CS"/>
</dbReference>
<dbReference type="InterPro" id="IPR000870">
    <property type="entry name" value="Homoserine_kinase"/>
</dbReference>
<dbReference type="InterPro" id="IPR020568">
    <property type="entry name" value="Ribosomal_Su5_D2-typ_SF"/>
</dbReference>
<dbReference type="InterPro" id="IPR014721">
    <property type="entry name" value="Ribsml_uS5_D2-typ_fold_subgr"/>
</dbReference>
<dbReference type="NCBIfam" id="NF002288">
    <property type="entry name" value="PRK01212.1-4"/>
    <property type="match status" value="1"/>
</dbReference>
<dbReference type="NCBIfam" id="TIGR00191">
    <property type="entry name" value="thrB"/>
    <property type="match status" value="1"/>
</dbReference>
<dbReference type="PANTHER" id="PTHR20861:SF1">
    <property type="entry name" value="HOMOSERINE KINASE"/>
    <property type="match status" value="1"/>
</dbReference>
<dbReference type="PANTHER" id="PTHR20861">
    <property type="entry name" value="HOMOSERINE/4-DIPHOSPHOCYTIDYL-2-C-METHYL-D-ERYTHRITOL KINASE"/>
    <property type="match status" value="1"/>
</dbReference>
<dbReference type="Pfam" id="PF08544">
    <property type="entry name" value="GHMP_kinases_C"/>
    <property type="match status" value="1"/>
</dbReference>
<dbReference type="Pfam" id="PF00288">
    <property type="entry name" value="GHMP_kinases_N"/>
    <property type="match status" value="1"/>
</dbReference>
<dbReference type="PIRSF" id="PIRSF000676">
    <property type="entry name" value="Homoser_kin"/>
    <property type="match status" value="1"/>
</dbReference>
<dbReference type="PRINTS" id="PR00958">
    <property type="entry name" value="HOMSERKINASE"/>
</dbReference>
<dbReference type="SUPFAM" id="SSF55060">
    <property type="entry name" value="GHMP Kinase, C-terminal domain"/>
    <property type="match status" value="1"/>
</dbReference>
<dbReference type="SUPFAM" id="SSF54211">
    <property type="entry name" value="Ribosomal protein S5 domain 2-like"/>
    <property type="match status" value="1"/>
</dbReference>
<dbReference type="PROSITE" id="PS00627">
    <property type="entry name" value="GHMP_KINASES_ATP"/>
    <property type="match status" value="1"/>
</dbReference>
<proteinExistence type="inferred from homology"/>
<gene>
    <name evidence="1" type="primary">thrB</name>
    <name type="ordered locus">cce_0510</name>
</gene>
<protein>
    <recommendedName>
        <fullName evidence="1">Homoserine kinase</fullName>
        <shortName evidence="1">HK</shortName>
        <shortName evidence="1">HSK</shortName>
        <ecNumber evidence="1">2.7.1.39</ecNumber>
    </recommendedName>
</protein>
<comment type="function">
    <text evidence="1">Catalyzes the ATP-dependent phosphorylation of L-homoserine to L-homoserine phosphate.</text>
</comment>
<comment type="catalytic activity">
    <reaction evidence="1">
        <text>L-homoserine + ATP = O-phospho-L-homoserine + ADP + H(+)</text>
        <dbReference type="Rhea" id="RHEA:13985"/>
        <dbReference type="ChEBI" id="CHEBI:15378"/>
        <dbReference type="ChEBI" id="CHEBI:30616"/>
        <dbReference type="ChEBI" id="CHEBI:57476"/>
        <dbReference type="ChEBI" id="CHEBI:57590"/>
        <dbReference type="ChEBI" id="CHEBI:456216"/>
        <dbReference type="EC" id="2.7.1.39"/>
    </reaction>
</comment>
<comment type="pathway">
    <text evidence="1">Amino-acid biosynthesis; L-threonine biosynthesis; L-threonine from L-aspartate: step 4/5.</text>
</comment>
<comment type="subcellular location">
    <subcellularLocation>
        <location evidence="1">Cytoplasm</location>
    </subcellularLocation>
</comment>
<comment type="similarity">
    <text evidence="1">Belongs to the GHMP kinase family. Homoserine kinase subfamily.</text>
</comment>
<feature type="chain" id="PRO_1000134247" description="Homoserine kinase">
    <location>
        <begin position="1"/>
        <end position="308"/>
    </location>
</feature>
<feature type="binding site" evidence="1">
    <location>
        <begin position="94"/>
        <end position="104"/>
    </location>
    <ligand>
        <name>ATP</name>
        <dbReference type="ChEBI" id="CHEBI:30616"/>
    </ligand>
</feature>
<reference key="1">
    <citation type="journal article" date="2008" name="Proc. Natl. Acad. Sci. U.S.A.">
        <title>The genome of Cyanothece 51142, a unicellular diazotrophic cyanobacterium important in the marine nitrogen cycle.</title>
        <authorList>
            <person name="Welsh E.A."/>
            <person name="Liberton M."/>
            <person name="Stoeckel J."/>
            <person name="Loh T."/>
            <person name="Elvitigala T."/>
            <person name="Wang C."/>
            <person name="Wollam A."/>
            <person name="Fulton R.S."/>
            <person name="Clifton S.W."/>
            <person name="Jacobs J.M."/>
            <person name="Aurora R."/>
            <person name="Ghosh B.K."/>
            <person name="Sherman L.A."/>
            <person name="Smith R.D."/>
            <person name="Wilson R.K."/>
            <person name="Pakrasi H.B."/>
        </authorList>
    </citation>
    <scope>NUCLEOTIDE SEQUENCE [LARGE SCALE GENOMIC DNA]</scope>
    <source>
        <strain>ATCC 51142 / BH68</strain>
    </source>
</reference>
<accession>B1WP79</accession>
<organism>
    <name type="scientific">Crocosphaera subtropica (strain ATCC 51142 / BH68)</name>
    <name type="common">Cyanothece sp. (strain ATCC 51142)</name>
    <dbReference type="NCBI Taxonomy" id="43989"/>
    <lineage>
        <taxon>Bacteria</taxon>
        <taxon>Bacillati</taxon>
        <taxon>Cyanobacteriota</taxon>
        <taxon>Cyanophyceae</taxon>
        <taxon>Oscillatoriophycideae</taxon>
        <taxon>Chroococcales</taxon>
        <taxon>Aphanothecaceae</taxon>
        <taxon>Crocosphaera</taxon>
        <taxon>Crocosphaera subtropica</taxon>
    </lineage>
</organism>
<name>KHSE_CROS5</name>